<organism>
    <name type="scientific">Saururus cernuus</name>
    <name type="common">Lizard's tail</name>
    <dbReference type="NCBI Taxonomy" id="13260"/>
    <lineage>
        <taxon>Eukaryota</taxon>
        <taxon>Viridiplantae</taxon>
        <taxon>Streptophyta</taxon>
        <taxon>Embryophyta</taxon>
        <taxon>Tracheophyta</taxon>
        <taxon>Spermatophyta</taxon>
        <taxon>Magnoliopsida</taxon>
        <taxon>Magnoliidae</taxon>
        <taxon>Piperales</taxon>
        <taxon>Saururaceae</taxon>
        <taxon>Saururus</taxon>
    </lineage>
</organism>
<sequence length="155" mass="17502">MSRRGTTEEKTAKSDPIYRNRLVNMLVNRILKHGKKSLAYQIIYRAVKKIQQKTETNPLSVLRQAIRGVTPDIAVKARRVGGSTHQVPIEIGSTQGKALAIRWLLWASRKRPGRNMAFKLSSELVDAAKGSGDAIRKKEETHRMAEANRAFAHFR</sequence>
<evidence type="ECO:0000250" key="1"/>
<evidence type="ECO:0000305" key="2"/>
<reference key="1">
    <citation type="journal article" date="2000" name="Am. J. Bot.">
        <title>Utility of 17 chloroplast genes for inferring the phylogeny of the basal angiosperms.</title>
        <authorList>
            <person name="Graham S.W."/>
            <person name="Olmstead R.G."/>
        </authorList>
    </citation>
    <scope>NUCLEOTIDE SEQUENCE [GENOMIC DNA]</scope>
</reference>
<comment type="function">
    <text evidence="1">One of the primary rRNA binding proteins, it binds directly to 16S rRNA where it nucleates assembly of the head domain of the 30S subunit.</text>
</comment>
<comment type="subunit">
    <text>Part of the 30S ribosomal subunit.</text>
</comment>
<comment type="subcellular location">
    <subcellularLocation>
        <location>Plastid</location>
        <location>Chloroplast</location>
    </subcellularLocation>
</comment>
<comment type="similarity">
    <text evidence="2">Belongs to the universal ribosomal protein uS7 family.</text>
</comment>
<keyword id="KW-0150">Chloroplast</keyword>
<keyword id="KW-0934">Plastid</keyword>
<keyword id="KW-0687">Ribonucleoprotein</keyword>
<keyword id="KW-0689">Ribosomal protein</keyword>
<keyword id="KW-0694">RNA-binding</keyword>
<keyword id="KW-0699">rRNA-binding</keyword>
<gene>
    <name type="primary">rps7</name>
</gene>
<geneLocation type="chloroplast"/>
<feature type="chain" id="PRO_0000124500" description="Small ribosomal subunit protein uS7c">
    <location>
        <begin position="1"/>
        <end position="155"/>
    </location>
</feature>
<protein>
    <recommendedName>
        <fullName evidence="2">Small ribosomal subunit protein uS7c</fullName>
    </recommendedName>
    <alternativeName>
        <fullName>30S ribosomal protein S7, chloroplastic</fullName>
    </alternativeName>
</protein>
<accession>Q9GFK3</accession>
<proteinExistence type="inferred from homology"/>
<name>RR7_SAUCE</name>
<dbReference type="EMBL" id="AF123783">
    <property type="protein sequence ID" value="AAG26128.1"/>
    <property type="molecule type" value="Genomic_DNA"/>
</dbReference>
<dbReference type="RefSeq" id="YP_011086860.1">
    <property type="nucleotide sequence ID" value="NC_087887.1"/>
</dbReference>
<dbReference type="RefSeq" id="YP_011086873.1">
    <property type="nucleotide sequence ID" value="NC_087887.1"/>
</dbReference>
<dbReference type="SMR" id="Q9GFK3"/>
<dbReference type="GeneID" id="89433410"/>
<dbReference type="GeneID" id="89433444"/>
<dbReference type="GO" id="GO:0009507">
    <property type="term" value="C:chloroplast"/>
    <property type="evidence" value="ECO:0007669"/>
    <property type="project" value="UniProtKB-SubCell"/>
</dbReference>
<dbReference type="GO" id="GO:0015935">
    <property type="term" value="C:small ribosomal subunit"/>
    <property type="evidence" value="ECO:0007669"/>
    <property type="project" value="InterPro"/>
</dbReference>
<dbReference type="GO" id="GO:0019843">
    <property type="term" value="F:rRNA binding"/>
    <property type="evidence" value="ECO:0007669"/>
    <property type="project" value="UniProtKB-UniRule"/>
</dbReference>
<dbReference type="GO" id="GO:0003735">
    <property type="term" value="F:structural constituent of ribosome"/>
    <property type="evidence" value="ECO:0007669"/>
    <property type="project" value="InterPro"/>
</dbReference>
<dbReference type="GO" id="GO:0006412">
    <property type="term" value="P:translation"/>
    <property type="evidence" value="ECO:0007669"/>
    <property type="project" value="UniProtKB-UniRule"/>
</dbReference>
<dbReference type="CDD" id="cd14871">
    <property type="entry name" value="uS7_Chloroplast"/>
    <property type="match status" value="1"/>
</dbReference>
<dbReference type="FunFam" id="1.10.455.10:FF:000001">
    <property type="entry name" value="30S ribosomal protein S7"/>
    <property type="match status" value="1"/>
</dbReference>
<dbReference type="Gene3D" id="1.10.455.10">
    <property type="entry name" value="Ribosomal protein S7 domain"/>
    <property type="match status" value="1"/>
</dbReference>
<dbReference type="HAMAP" id="MF_00480_B">
    <property type="entry name" value="Ribosomal_uS7_B"/>
    <property type="match status" value="1"/>
</dbReference>
<dbReference type="InterPro" id="IPR000235">
    <property type="entry name" value="Ribosomal_uS7"/>
</dbReference>
<dbReference type="InterPro" id="IPR005717">
    <property type="entry name" value="Ribosomal_uS7_bac/org-type"/>
</dbReference>
<dbReference type="InterPro" id="IPR020606">
    <property type="entry name" value="Ribosomal_uS7_CS"/>
</dbReference>
<dbReference type="InterPro" id="IPR023798">
    <property type="entry name" value="Ribosomal_uS7_dom"/>
</dbReference>
<dbReference type="InterPro" id="IPR036823">
    <property type="entry name" value="Ribosomal_uS7_dom_sf"/>
</dbReference>
<dbReference type="NCBIfam" id="TIGR01029">
    <property type="entry name" value="rpsG_bact"/>
    <property type="match status" value="1"/>
</dbReference>
<dbReference type="PANTHER" id="PTHR11205">
    <property type="entry name" value="RIBOSOMAL PROTEIN S7"/>
    <property type="match status" value="1"/>
</dbReference>
<dbReference type="Pfam" id="PF00177">
    <property type="entry name" value="Ribosomal_S7"/>
    <property type="match status" value="1"/>
</dbReference>
<dbReference type="PIRSF" id="PIRSF002122">
    <property type="entry name" value="RPS7p_RPS7a_RPS5e_RPS7o"/>
    <property type="match status" value="1"/>
</dbReference>
<dbReference type="SUPFAM" id="SSF47973">
    <property type="entry name" value="Ribosomal protein S7"/>
    <property type="match status" value="1"/>
</dbReference>
<dbReference type="PROSITE" id="PS00052">
    <property type="entry name" value="RIBOSOMAL_S7"/>
    <property type="match status" value="1"/>
</dbReference>